<keyword id="KW-0067">ATP-binding</keyword>
<keyword id="KW-1003">Cell membrane</keyword>
<keyword id="KW-0472">Membrane</keyword>
<keyword id="KW-0547">Nucleotide-binding</keyword>
<keyword id="KW-1278">Translocase</keyword>
<keyword id="KW-0813">Transport</keyword>
<reference key="1">
    <citation type="journal article" date="2006" name="Proc. Natl. Acad. Sci. U.S.A.">
        <title>Molecular genetic anatomy of inter- and intraserotype variation in the human bacterial pathogen group A Streptococcus.</title>
        <authorList>
            <person name="Beres S.B."/>
            <person name="Richter E.W."/>
            <person name="Nagiec M.J."/>
            <person name="Sumby P."/>
            <person name="Porcella S.F."/>
            <person name="DeLeo F.R."/>
            <person name="Musser J.M."/>
        </authorList>
    </citation>
    <scope>NUCLEOTIDE SEQUENCE [LARGE SCALE GENOMIC DNA]</scope>
    <source>
        <strain>MGAS9429</strain>
    </source>
</reference>
<dbReference type="EC" id="7.6.2.11" evidence="1"/>
<dbReference type="EMBL" id="CP000259">
    <property type="protein sequence ID" value="ABF32132.1"/>
    <property type="molecule type" value="Genomic_DNA"/>
</dbReference>
<dbReference type="RefSeq" id="WP_002989863.1">
    <property type="nucleotide sequence ID" value="NC_008021.1"/>
</dbReference>
<dbReference type="SMR" id="Q1JLT7"/>
<dbReference type="KEGG" id="spk:MGAS9429_Spy0945"/>
<dbReference type="HOGENOM" id="CLU_000604_1_1_9"/>
<dbReference type="Proteomes" id="UP000002433">
    <property type="component" value="Chromosome"/>
</dbReference>
<dbReference type="GO" id="GO:0043190">
    <property type="term" value="C:ATP-binding cassette (ABC) transporter complex"/>
    <property type="evidence" value="ECO:0007669"/>
    <property type="project" value="InterPro"/>
</dbReference>
<dbReference type="GO" id="GO:0015417">
    <property type="term" value="F:ABC-type polyamine transporter activity"/>
    <property type="evidence" value="ECO:0007669"/>
    <property type="project" value="UniProtKB-EC"/>
</dbReference>
<dbReference type="GO" id="GO:0005524">
    <property type="term" value="F:ATP binding"/>
    <property type="evidence" value="ECO:0007669"/>
    <property type="project" value="UniProtKB-KW"/>
</dbReference>
<dbReference type="GO" id="GO:0016887">
    <property type="term" value="F:ATP hydrolysis activity"/>
    <property type="evidence" value="ECO:0007669"/>
    <property type="project" value="InterPro"/>
</dbReference>
<dbReference type="FunFam" id="3.40.50.300:FF:000042">
    <property type="entry name" value="Maltose/maltodextrin ABC transporter, ATP-binding protein"/>
    <property type="match status" value="1"/>
</dbReference>
<dbReference type="Gene3D" id="2.40.50.100">
    <property type="match status" value="1"/>
</dbReference>
<dbReference type="Gene3D" id="3.40.50.300">
    <property type="entry name" value="P-loop containing nucleotide triphosphate hydrolases"/>
    <property type="match status" value="1"/>
</dbReference>
<dbReference type="InterPro" id="IPR003593">
    <property type="entry name" value="AAA+_ATPase"/>
</dbReference>
<dbReference type="InterPro" id="IPR050093">
    <property type="entry name" value="ABC_SmlMolc_Importer"/>
</dbReference>
<dbReference type="InterPro" id="IPR003439">
    <property type="entry name" value="ABC_transporter-like_ATP-bd"/>
</dbReference>
<dbReference type="InterPro" id="IPR017871">
    <property type="entry name" value="ABC_transporter-like_CS"/>
</dbReference>
<dbReference type="InterPro" id="IPR008995">
    <property type="entry name" value="Mo/tungstate-bd_C_term_dom"/>
</dbReference>
<dbReference type="InterPro" id="IPR027417">
    <property type="entry name" value="P-loop_NTPase"/>
</dbReference>
<dbReference type="InterPro" id="IPR005893">
    <property type="entry name" value="PotA-like"/>
</dbReference>
<dbReference type="InterPro" id="IPR013611">
    <property type="entry name" value="Transp-assoc_OB_typ2"/>
</dbReference>
<dbReference type="NCBIfam" id="TIGR01187">
    <property type="entry name" value="potA"/>
    <property type="match status" value="1"/>
</dbReference>
<dbReference type="PANTHER" id="PTHR42781">
    <property type="entry name" value="SPERMIDINE/PUTRESCINE IMPORT ATP-BINDING PROTEIN POTA"/>
    <property type="match status" value="1"/>
</dbReference>
<dbReference type="PANTHER" id="PTHR42781:SF4">
    <property type="entry name" value="SPERMIDINE_PUTRESCINE IMPORT ATP-BINDING PROTEIN POTA"/>
    <property type="match status" value="1"/>
</dbReference>
<dbReference type="Pfam" id="PF00005">
    <property type="entry name" value="ABC_tran"/>
    <property type="match status" value="1"/>
</dbReference>
<dbReference type="Pfam" id="PF08402">
    <property type="entry name" value="TOBE_2"/>
    <property type="match status" value="1"/>
</dbReference>
<dbReference type="SMART" id="SM00382">
    <property type="entry name" value="AAA"/>
    <property type="match status" value="1"/>
</dbReference>
<dbReference type="SUPFAM" id="SSF50331">
    <property type="entry name" value="MOP-like"/>
    <property type="match status" value="1"/>
</dbReference>
<dbReference type="SUPFAM" id="SSF52540">
    <property type="entry name" value="P-loop containing nucleoside triphosphate hydrolases"/>
    <property type="match status" value="1"/>
</dbReference>
<dbReference type="PROSITE" id="PS00211">
    <property type="entry name" value="ABC_TRANSPORTER_1"/>
    <property type="match status" value="1"/>
</dbReference>
<dbReference type="PROSITE" id="PS50893">
    <property type="entry name" value="ABC_TRANSPORTER_2"/>
    <property type="match status" value="1"/>
</dbReference>
<dbReference type="PROSITE" id="PS51305">
    <property type="entry name" value="POTA"/>
    <property type="match status" value="1"/>
</dbReference>
<gene>
    <name evidence="1" type="primary">potA</name>
    <name type="ordered locus">MGAS9429_Spy0945</name>
</gene>
<name>POTA_STRPC</name>
<proteinExistence type="inferred from homology"/>
<comment type="function">
    <text evidence="1">Part of the ABC transporter complex PotABCD involved in spermidine/putrescine import. Responsible for energy coupling to the transport system.</text>
</comment>
<comment type="catalytic activity">
    <reaction evidence="1">
        <text>ATP + H2O + polyamine-[polyamine-binding protein]Side 1 = ADP + phosphate + polyamineSide 2 + [polyamine-binding protein]Side 1.</text>
        <dbReference type="EC" id="7.6.2.11"/>
    </reaction>
</comment>
<comment type="subunit">
    <text evidence="1">The complex is composed of two ATP-binding proteins (PotA), two transmembrane proteins (PotB and PotC) and a solute-binding protein (PotD).</text>
</comment>
<comment type="subcellular location">
    <subcellularLocation>
        <location evidence="1">Cell membrane</location>
        <topology evidence="1">Peripheral membrane protein</topology>
    </subcellularLocation>
</comment>
<comment type="similarity">
    <text evidence="1">Belongs to the ABC transporter superfamily. Spermidine/putrescine importer (TC 3.A.1.11.1) family.</text>
</comment>
<feature type="chain" id="PRO_0000286307" description="Spermidine/putrescine import ATP-binding protein PotA">
    <location>
        <begin position="1"/>
        <end position="384"/>
    </location>
</feature>
<feature type="domain" description="ABC transporter" evidence="1">
    <location>
        <begin position="6"/>
        <end position="238"/>
    </location>
</feature>
<feature type="binding site" evidence="1">
    <location>
        <begin position="40"/>
        <end position="47"/>
    </location>
    <ligand>
        <name>ATP</name>
        <dbReference type="ChEBI" id="CHEBI:30616"/>
    </ligand>
</feature>
<protein>
    <recommendedName>
        <fullName evidence="1">Spermidine/putrescine import ATP-binding protein PotA</fullName>
        <ecNumber evidence="1">7.6.2.11</ecNumber>
    </recommendedName>
</protein>
<evidence type="ECO:0000255" key="1">
    <source>
        <dbReference type="HAMAP-Rule" id="MF_01726"/>
    </source>
</evidence>
<sequence>MTKPIITFNNVSKTFEDSGTQVLKNINFDLEEGKFYTLLGASGSGKSTILNIMAGLLDASSGDIYLDGERINDLPINKRDIHTVFQNYALFPHMTVFENVAFALKLKKVDKKEIAKRVKETLKMVQLEGYENRSIQKLSGGQRQRVAIARAIINQPRVVLLDEPLSALDLKLRTEMQYELRELQQRLGITFVFVTHDQEEALAMSDWIFVMNEGEIVQSGTPVDIYDEPINHFVANFIGESNIINGTMIEDYLVSFNGKEFESVDGGMRPNEPVEVVIRPEDLQITLPEEGKLQVKVDTQLFRGVHYEIIAYDELGNEWMIHSTRKAIEGEVIGLDFTPEDLHIMRLNETEEEFDARIEEYVEMDEPEDGLINAIEEERNEENL</sequence>
<organism>
    <name type="scientific">Streptococcus pyogenes serotype M12 (strain MGAS9429)</name>
    <dbReference type="NCBI Taxonomy" id="370551"/>
    <lineage>
        <taxon>Bacteria</taxon>
        <taxon>Bacillati</taxon>
        <taxon>Bacillota</taxon>
        <taxon>Bacilli</taxon>
        <taxon>Lactobacillales</taxon>
        <taxon>Streptococcaceae</taxon>
        <taxon>Streptococcus</taxon>
    </lineage>
</organism>
<accession>Q1JLT7</accession>